<evidence type="ECO:0000250" key="1"/>
<evidence type="ECO:0000250" key="2">
    <source>
        <dbReference type="UniProtKB" id="P00157"/>
    </source>
</evidence>
<evidence type="ECO:0000255" key="3">
    <source>
        <dbReference type="PROSITE-ProRule" id="PRU00967"/>
    </source>
</evidence>
<evidence type="ECO:0000255" key="4">
    <source>
        <dbReference type="PROSITE-ProRule" id="PRU00968"/>
    </source>
</evidence>
<sequence length="379" mass="42686">MTNIRKTHPLMKIINHSFIDLPAPSNISSWWNFGSLLGICLIIQILTGLFLAMHYTSDTMTAFSSVTHICRDVNYGWLIRYLHANGASMFFICLFLHVGRGLYYGSYLFLETWNIGVLLLFAVMATAFMGYVLPWGQMSFWGATVITNLLSAIPYIGSDLVQWIWGGFSVDKATLTRFFAFHFILPFIVAALAGVHLLFLHETGSNNPSGLSSDADKIPFHPYYTIKDILGVLFLFLILTSLVLFSPDLLGDPDNYTPANPLNTPPHIKPEWYFLFAYAILRSIPNKLGGVLALVMSILVLALIPLLHTSKQRSMMFRPFSQCLFWILVADLITLTWIGGQPVEHPFIIIGQLASILYFLLILVLMPITSVLENNLLKW</sequence>
<protein>
    <recommendedName>
        <fullName>Cytochrome b</fullName>
    </recommendedName>
    <alternativeName>
        <fullName>Complex III subunit 3</fullName>
    </alternativeName>
    <alternativeName>
        <fullName>Complex III subunit III</fullName>
    </alternativeName>
    <alternativeName>
        <fullName>Cytochrome b-c1 complex subunit 3</fullName>
    </alternativeName>
    <alternativeName>
        <fullName>Ubiquinol-cytochrome-c reductase complex cytochrome b subunit</fullName>
    </alternativeName>
</protein>
<organism>
    <name type="scientific">Chodsigoa caovansunga</name>
    <name type="common">Van Sung's shrew</name>
    <dbReference type="NCBI Taxonomy" id="269271"/>
    <lineage>
        <taxon>Eukaryota</taxon>
        <taxon>Metazoa</taxon>
        <taxon>Chordata</taxon>
        <taxon>Craniata</taxon>
        <taxon>Vertebrata</taxon>
        <taxon>Euteleostomi</taxon>
        <taxon>Mammalia</taxon>
        <taxon>Eutheria</taxon>
        <taxon>Laurasiatheria</taxon>
        <taxon>Eulipotyphla</taxon>
        <taxon>Soricidae</taxon>
        <taxon>Soricinae</taxon>
        <taxon>Chodsigoa</taxon>
    </lineage>
</organism>
<geneLocation type="mitochondrion"/>
<name>CYB_CHOCA</name>
<comment type="function">
    <text evidence="2">Component of the ubiquinol-cytochrome c reductase complex (complex III or cytochrome b-c1 complex) that is part of the mitochondrial respiratory chain. The b-c1 complex mediates electron transfer from ubiquinol to cytochrome c. Contributes to the generation of a proton gradient across the mitochondrial membrane that is then used for ATP synthesis.</text>
</comment>
<comment type="cofactor">
    <cofactor evidence="2">
        <name>heme b</name>
        <dbReference type="ChEBI" id="CHEBI:60344"/>
    </cofactor>
    <text evidence="2">Binds 2 heme b groups non-covalently.</text>
</comment>
<comment type="subunit">
    <text evidence="2">The cytochrome bc1 complex contains 11 subunits: 3 respiratory subunits (MT-CYB, CYC1 and UQCRFS1), 2 core proteins (UQCRC1 and UQCRC2) and 6 low-molecular weight proteins (UQCRH/QCR6, UQCRB/QCR7, UQCRQ/QCR8, UQCR10/QCR9, UQCR11/QCR10 and a cleavage product of UQCRFS1). This cytochrome bc1 complex then forms a dimer.</text>
</comment>
<comment type="subcellular location">
    <subcellularLocation>
        <location evidence="2">Mitochondrion inner membrane</location>
        <topology evidence="2">Multi-pass membrane protein</topology>
    </subcellularLocation>
</comment>
<comment type="miscellaneous">
    <text evidence="1">Heme 1 (or BL or b562) is low-potential and absorbs at about 562 nm, and heme 2 (or BH or b566) is high-potential and absorbs at about 566 nm.</text>
</comment>
<comment type="similarity">
    <text evidence="3 4">Belongs to the cytochrome b family.</text>
</comment>
<comment type="caution">
    <text evidence="2">The full-length protein contains only eight transmembrane helices, not nine as predicted by bioinformatics tools.</text>
</comment>
<accession>Q1XIM8</accession>
<accession>Q1XIM7</accession>
<reference key="1">
    <citation type="submission" date="2004-03" db="EMBL/GenBank/DDBJ databases">
        <title>Molecular phylogenetics of the Soricidae (Insectivora, Mammalia) based on mitochondrial cytochrome b gene sequences.</title>
        <authorList>
            <person name="Ohdachi S.D."/>
            <person name="Iwasa M.A."/>
            <person name="Abe H."/>
            <person name="Vogel P."/>
            <person name="Oshida T."/>
            <person name="Lin L.K."/>
            <person name="Hasegawa M."/>
        </authorList>
    </citation>
    <scope>NUCLEOTIDE SEQUENCE [GENOMIC DNA]</scope>
    <source>
        <strain>Isolate AMNH 101500</strain>
        <strain>Isolate AMNH 101520</strain>
    </source>
</reference>
<feature type="chain" id="PRO_0000254678" description="Cytochrome b">
    <location>
        <begin position="1"/>
        <end position="379"/>
    </location>
</feature>
<feature type="transmembrane region" description="Helical" evidence="2">
    <location>
        <begin position="33"/>
        <end position="53"/>
    </location>
</feature>
<feature type="transmembrane region" description="Helical" evidence="2">
    <location>
        <begin position="77"/>
        <end position="98"/>
    </location>
</feature>
<feature type="transmembrane region" description="Helical" evidence="2">
    <location>
        <begin position="113"/>
        <end position="133"/>
    </location>
</feature>
<feature type="transmembrane region" description="Helical" evidence="2">
    <location>
        <begin position="178"/>
        <end position="198"/>
    </location>
</feature>
<feature type="transmembrane region" description="Helical" evidence="2">
    <location>
        <begin position="226"/>
        <end position="246"/>
    </location>
</feature>
<feature type="transmembrane region" description="Helical" evidence="2">
    <location>
        <begin position="288"/>
        <end position="308"/>
    </location>
</feature>
<feature type="transmembrane region" description="Helical" evidence="2">
    <location>
        <begin position="320"/>
        <end position="340"/>
    </location>
</feature>
<feature type="transmembrane region" description="Helical" evidence="2">
    <location>
        <begin position="347"/>
        <end position="367"/>
    </location>
</feature>
<feature type="binding site" description="axial binding residue" evidence="2">
    <location>
        <position position="83"/>
    </location>
    <ligand>
        <name>heme b</name>
        <dbReference type="ChEBI" id="CHEBI:60344"/>
        <label>b562</label>
    </ligand>
    <ligandPart>
        <name>Fe</name>
        <dbReference type="ChEBI" id="CHEBI:18248"/>
    </ligandPart>
</feature>
<feature type="binding site" description="axial binding residue" evidence="2">
    <location>
        <position position="97"/>
    </location>
    <ligand>
        <name>heme b</name>
        <dbReference type="ChEBI" id="CHEBI:60344"/>
        <label>b566</label>
    </ligand>
    <ligandPart>
        <name>Fe</name>
        <dbReference type="ChEBI" id="CHEBI:18248"/>
    </ligandPart>
</feature>
<feature type="binding site" description="axial binding residue" evidence="2">
    <location>
        <position position="182"/>
    </location>
    <ligand>
        <name>heme b</name>
        <dbReference type="ChEBI" id="CHEBI:60344"/>
        <label>b562</label>
    </ligand>
    <ligandPart>
        <name>Fe</name>
        <dbReference type="ChEBI" id="CHEBI:18248"/>
    </ligandPart>
</feature>
<feature type="binding site" description="axial binding residue" evidence="2">
    <location>
        <position position="196"/>
    </location>
    <ligand>
        <name>heme b</name>
        <dbReference type="ChEBI" id="CHEBI:60344"/>
        <label>b566</label>
    </ligand>
    <ligandPart>
        <name>Fe</name>
        <dbReference type="ChEBI" id="CHEBI:18248"/>
    </ligandPart>
</feature>
<feature type="binding site" evidence="2">
    <location>
        <position position="201"/>
    </location>
    <ligand>
        <name>a ubiquinone</name>
        <dbReference type="ChEBI" id="CHEBI:16389"/>
    </ligand>
</feature>
<feature type="sequence variant" description="In strain: Isolate AMNH 101520.">
    <original>F</original>
    <variation>L</variation>
    <location>
        <position position="234"/>
    </location>
</feature>
<feature type="sequence variant" description="In strain: Isolate AMNH 101520.">
    <original>V</original>
    <variation>L</variation>
    <location>
        <position position="371"/>
    </location>
</feature>
<proteinExistence type="inferred from homology"/>
<dbReference type="EMBL" id="AB175103">
    <property type="protein sequence ID" value="BAE92668.1"/>
    <property type="molecule type" value="Genomic_DNA"/>
</dbReference>
<dbReference type="EMBL" id="AB175104">
    <property type="protein sequence ID" value="BAE92669.1"/>
    <property type="molecule type" value="Genomic_DNA"/>
</dbReference>
<dbReference type="SMR" id="Q1XIM8"/>
<dbReference type="GO" id="GO:0005743">
    <property type="term" value="C:mitochondrial inner membrane"/>
    <property type="evidence" value="ECO:0007669"/>
    <property type="project" value="UniProtKB-SubCell"/>
</dbReference>
<dbReference type="GO" id="GO:0045275">
    <property type="term" value="C:respiratory chain complex III"/>
    <property type="evidence" value="ECO:0007669"/>
    <property type="project" value="InterPro"/>
</dbReference>
<dbReference type="GO" id="GO:0046872">
    <property type="term" value="F:metal ion binding"/>
    <property type="evidence" value="ECO:0007669"/>
    <property type="project" value="UniProtKB-KW"/>
</dbReference>
<dbReference type="GO" id="GO:0008121">
    <property type="term" value="F:ubiquinol-cytochrome-c reductase activity"/>
    <property type="evidence" value="ECO:0007669"/>
    <property type="project" value="InterPro"/>
</dbReference>
<dbReference type="GO" id="GO:0006122">
    <property type="term" value="P:mitochondrial electron transport, ubiquinol to cytochrome c"/>
    <property type="evidence" value="ECO:0007669"/>
    <property type="project" value="TreeGrafter"/>
</dbReference>
<dbReference type="CDD" id="cd00290">
    <property type="entry name" value="cytochrome_b_C"/>
    <property type="match status" value="1"/>
</dbReference>
<dbReference type="CDD" id="cd00284">
    <property type="entry name" value="Cytochrome_b_N"/>
    <property type="match status" value="1"/>
</dbReference>
<dbReference type="FunFam" id="1.20.810.10:FF:000002">
    <property type="entry name" value="Cytochrome b"/>
    <property type="match status" value="1"/>
</dbReference>
<dbReference type="Gene3D" id="1.20.810.10">
    <property type="entry name" value="Cytochrome Bc1 Complex, Chain C"/>
    <property type="match status" value="1"/>
</dbReference>
<dbReference type="InterPro" id="IPR005798">
    <property type="entry name" value="Cyt_b/b6_C"/>
</dbReference>
<dbReference type="InterPro" id="IPR036150">
    <property type="entry name" value="Cyt_b/b6_C_sf"/>
</dbReference>
<dbReference type="InterPro" id="IPR005797">
    <property type="entry name" value="Cyt_b/b6_N"/>
</dbReference>
<dbReference type="InterPro" id="IPR027387">
    <property type="entry name" value="Cytb/b6-like_sf"/>
</dbReference>
<dbReference type="InterPro" id="IPR030689">
    <property type="entry name" value="Cytochrome_b"/>
</dbReference>
<dbReference type="InterPro" id="IPR048260">
    <property type="entry name" value="Cytochrome_b_C_euk/bac"/>
</dbReference>
<dbReference type="InterPro" id="IPR048259">
    <property type="entry name" value="Cytochrome_b_N_euk/bac"/>
</dbReference>
<dbReference type="InterPro" id="IPR016174">
    <property type="entry name" value="Di-haem_cyt_TM"/>
</dbReference>
<dbReference type="PANTHER" id="PTHR19271">
    <property type="entry name" value="CYTOCHROME B"/>
    <property type="match status" value="1"/>
</dbReference>
<dbReference type="PANTHER" id="PTHR19271:SF16">
    <property type="entry name" value="CYTOCHROME B"/>
    <property type="match status" value="1"/>
</dbReference>
<dbReference type="Pfam" id="PF00032">
    <property type="entry name" value="Cytochrom_B_C"/>
    <property type="match status" value="1"/>
</dbReference>
<dbReference type="Pfam" id="PF00033">
    <property type="entry name" value="Cytochrome_B"/>
    <property type="match status" value="1"/>
</dbReference>
<dbReference type="PIRSF" id="PIRSF038885">
    <property type="entry name" value="COB"/>
    <property type="match status" value="1"/>
</dbReference>
<dbReference type="SUPFAM" id="SSF81648">
    <property type="entry name" value="a domain/subunit of cytochrome bc1 complex (Ubiquinol-cytochrome c reductase)"/>
    <property type="match status" value="1"/>
</dbReference>
<dbReference type="SUPFAM" id="SSF81342">
    <property type="entry name" value="Transmembrane di-heme cytochromes"/>
    <property type="match status" value="1"/>
</dbReference>
<dbReference type="PROSITE" id="PS51003">
    <property type="entry name" value="CYTB_CTER"/>
    <property type="match status" value="1"/>
</dbReference>
<dbReference type="PROSITE" id="PS51002">
    <property type="entry name" value="CYTB_NTER"/>
    <property type="match status" value="1"/>
</dbReference>
<gene>
    <name type="primary">MT-CYB</name>
    <name type="synonym">COB</name>
    <name type="synonym">CYTB</name>
    <name type="synonym">MTCYB</name>
</gene>
<keyword id="KW-0249">Electron transport</keyword>
<keyword id="KW-0349">Heme</keyword>
<keyword id="KW-0408">Iron</keyword>
<keyword id="KW-0472">Membrane</keyword>
<keyword id="KW-0479">Metal-binding</keyword>
<keyword id="KW-0496">Mitochondrion</keyword>
<keyword id="KW-0999">Mitochondrion inner membrane</keyword>
<keyword id="KW-0679">Respiratory chain</keyword>
<keyword id="KW-0812">Transmembrane</keyword>
<keyword id="KW-1133">Transmembrane helix</keyword>
<keyword id="KW-0813">Transport</keyword>
<keyword id="KW-0830">Ubiquinone</keyword>